<accession>Q06909</accession>
<sequence length="174" mass="19575">MERFRDGAQDAFEDLFARHAPRVQGFLARMVRNGALAEDLLQATFLSVIRSRGRYEPGTRFIPWLMTIAANAARDALRHQRHVDAYASREDTATPASAAPDDSDPSLRRHLLDALQQLHPDHREAVVLSKVEGWSFEEIGALRGISPGAARLRAHRGYEKLRELLGELELEVAR</sequence>
<gene>
    <name type="primary">carQ</name>
</gene>
<proteinExistence type="evidence at transcript level"/>
<keyword id="KW-0125">Carotenoid biosynthesis</keyword>
<keyword id="KW-0238">DNA-binding</keyword>
<keyword id="KW-0731">Sigma factor</keyword>
<keyword id="KW-0804">Transcription</keyword>
<keyword id="KW-0805">Transcription regulation</keyword>
<feature type="chain" id="PRO_0000094008" description="RNA polymerase sigma factor CarQ">
    <location>
        <begin position="1"/>
        <end position="174"/>
    </location>
</feature>
<feature type="DNA-binding region" description="H-T-H motif" evidence="1">
    <location>
        <begin position="136"/>
        <end position="155"/>
    </location>
</feature>
<feature type="region of interest" description="Disordered" evidence="2">
    <location>
        <begin position="86"/>
        <end position="106"/>
    </location>
</feature>
<feature type="short sequence motif" description="Polymerase core binding">
    <location>
        <begin position="39"/>
        <end position="52"/>
    </location>
</feature>
<organism>
    <name type="scientific">Myxococcus xanthus</name>
    <dbReference type="NCBI Taxonomy" id="34"/>
    <lineage>
        <taxon>Bacteria</taxon>
        <taxon>Pseudomonadati</taxon>
        <taxon>Myxococcota</taxon>
        <taxon>Myxococcia</taxon>
        <taxon>Myxococcales</taxon>
        <taxon>Cystobacterineae</taxon>
        <taxon>Myxococcaceae</taxon>
        <taxon>Myxococcus</taxon>
    </lineage>
</organism>
<comment type="function">
    <text>Sigma factors are initiation factors that promote the attachment of RNA polymerase to specific initiation sites and are then released. This sigma factor regulates genes for the light induced biosynthesis of carotenoids.</text>
</comment>
<comment type="induction">
    <text>By light.</text>
</comment>
<comment type="similarity">
    <text evidence="3">Belongs to the sigma-70 factor family. ECF subfamily.</text>
</comment>
<reference key="1">
    <citation type="journal article" date="1993" name="Mol. Microbiol.">
        <title>Light-induced carotenogenesis in Myxococcus xanthus: DNA sequence analysis of the carR region.</title>
        <authorList>
            <person name="McGowan S.J."/>
            <person name="Gorham H.C."/>
            <person name="Hodgson D.A."/>
        </authorList>
    </citation>
    <scope>NUCLEOTIDE SEQUENCE [GENOMIC DNA]</scope>
    <source>
        <strain>DK101</strain>
    </source>
</reference>
<reference key="2">
    <citation type="journal article" date="1994" name="Proc. Natl. Acad. Sci. U.S.A.">
        <title>Analysis of the Streptomyces coelicolor sigE gene reveals the existence of a subfamily of eubacterial RNA polymerase sigma factors involved in the regulation of extracytoplasmic functions.</title>
        <authorList>
            <person name="Lonetto M.A."/>
            <person name="Brown K.L."/>
            <person name="Rudd K.E."/>
            <person name="Buttner M.J."/>
        </authorList>
    </citation>
    <scope>SIMILARITY TO OTHER ECF SIGMA FACTORS</scope>
</reference>
<dbReference type="EMBL" id="X71062">
    <property type="protein sequence ID" value="CAA50381.1"/>
    <property type="molecule type" value="Genomic_DNA"/>
</dbReference>
<dbReference type="PIR" id="S39877">
    <property type="entry name" value="S39877"/>
</dbReference>
<dbReference type="SMR" id="Q06909"/>
<dbReference type="OMA" id="KVEGWSF"/>
<dbReference type="GO" id="GO:0003677">
    <property type="term" value="F:DNA binding"/>
    <property type="evidence" value="ECO:0007669"/>
    <property type="project" value="UniProtKB-KW"/>
</dbReference>
<dbReference type="GO" id="GO:0016987">
    <property type="term" value="F:sigma factor activity"/>
    <property type="evidence" value="ECO:0007669"/>
    <property type="project" value="UniProtKB-KW"/>
</dbReference>
<dbReference type="GO" id="GO:0016117">
    <property type="term" value="P:carotenoid biosynthetic process"/>
    <property type="evidence" value="ECO:0007669"/>
    <property type="project" value="UniProtKB-KW"/>
</dbReference>
<dbReference type="GO" id="GO:0006352">
    <property type="term" value="P:DNA-templated transcription initiation"/>
    <property type="evidence" value="ECO:0007669"/>
    <property type="project" value="InterPro"/>
</dbReference>
<dbReference type="CDD" id="cd06171">
    <property type="entry name" value="Sigma70_r4"/>
    <property type="match status" value="1"/>
</dbReference>
<dbReference type="Gene3D" id="1.10.1740.10">
    <property type="match status" value="1"/>
</dbReference>
<dbReference type="Gene3D" id="1.10.10.10">
    <property type="entry name" value="Winged helix-like DNA-binding domain superfamily/Winged helix DNA-binding domain"/>
    <property type="match status" value="1"/>
</dbReference>
<dbReference type="InterPro" id="IPR039425">
    <property type="entry name" value="RNA_pol_sigma-70-like"/>
</dbReference>
<dbReference type="InterPro" id="IPR014284">
    <property type="entry name" value="RNA_pol_sigma-70_dom"/>
</dbReference>
<dbReference type="InterPro" id="IPR000838">
    <property type="entry name" value="RNA_pol_sigma70_ECF_CS"/>
</dbReference>
<dbReference type="InterPro" id="IPR007627">
    <property type="entry name" value="RNA_pol_sigma70_r2"/>
</dbReference>
<dbReference type="InterPro" id="IPR013249">
    <property type="entry name" value="RNA_pol_sigma70_r4_t2"/>
</dbReference>
<dbReference type="InterPro" id="IPR013325">
    <property type="entry name" value="RNA_pol_sigma_r2"/>
</dbReference>
<dbReference type="InterPro" id="IPR013324">
    <property type="entry name" value="RNA_pol_sigma_r3/r4-like"/>
</dbReference>
<dbReference type="InterPro" id="IPR036388">
    <property type="entry name" value="WH-like_DNA-bd_sf"/>
</dbReference>
<dbReference type="NCBIfam" id="TIGR02937">
    <property type="entry name" value="sigma70-ECF"/>
    <property type="match status" value="1"/>
</dbReference>
<dbReference type="PANTHER" id="PTHR43133">
    <property type="entry name" value="RNA POLYMERASE ECF-TYPE SIGMA FACTO"/>
    <property type="match status" value="1"/>
</dbReference>
<dbReference type="PANTHER" id="PTHR43133:SF8">
    <property type="entry name" value="RNA POLYMERASE SIGMA FACTOR HI_1459-RELATED"/>
    <property type="match status" value="1"/>
</dbReference>
<dbReference type="Pfam" id="PF04542">
    <property type="entry name" value="Sigma70_r2"/>
    <property type="match status" value="1"/>
</dbReference>
<dbReference type="Pfam" id="PF08281">
    <property type="entry name" value="Sigma70_r4_2"/>
    <property type="match status" value="1"/>
</dbReference>
<dbReference type="SUPFAM" id="SSF88946">
    <property type="entry name" value="Sigma2 domain of RNA polymerase sigma factors"/>
    <property type="match status" value="1"/>
</dbReference>
<dbReference type="SUPFAM" id="SSF88659">
    <property type="entry name" value="Sigma3 and sigma4 domains of RNA polymerase sigma factors"/>
    <property type="match status" value="1"/>
</dbReference>
<dbReference type="PROSITE" id="PS01063">
    <property type="entry name" value="SIGMA70_ECF"/>
    <property type="match status" value="1"/>
</dbReference>
<name>CARQ_MYXXA</name>
<protein>
    <recommendedName>
        <fullName>RNA polymerase sigma factor CarQ</fullName>
    </recommendedName>
</protein>
<evidence type="ECO:0000250" key="1"/>
<evidence type="ECO:0000256" key="2">
    <source>
        <dbReference type="SAM" id="MobiDB-lite"/>
    </source>
</evidence>
<evidence type="ECO:0000305" key="3"/>